<evidence type="ECO:0000255" key="1">
    <source>
        <dbReference type="HAMAP-Rule" id="MF_00110"/>
    </source>
</evidence>
<sequence>MEKITVTLGERSYPITIAAGLFNDPASFKPLKAGDQVMLVTNQTLAPLYLDSLRAVLEHGGIKVDQVILPDGEQYKSLSVMEQVFSALLEKPHGRDTTLVALGGGVVGDLTGFAAACYQRGVRFIQVPTTLLSQVDSSVGGKTAVNHPLGKNMIGAFYQPASVVVDLNCLKTLPPRELASGLAEVIKYGIILDAAFFDWLENNIDALLALDMSALAYCIRRCCELKADVVAADEREESGARALLNLGHTYGHAIEAEMGYGVWLHGEAVAAGMVMAAQTSRRLGQLSVSDVERIKKLLLRAGLPVCGPKEMAPESYLPHMMRDKKVLAGELRLVLPTAIGKSEIRGGVAHDMVLASIADCRP</sequence>
<accession>A9R4A9</accession>
<dbReference type="EC" id="4.2.3.4" evidence="1"/>
<dbReference type="EMBL" id="CP000901">
    <property type="protein sequence ID" value="ABX86896.1"/>
    <property type="molecule type" value="Genomic_DNA"/>
</dbReference>
<dbReference type="RefSeq" id="WP_002208898.1">
    <property type="nucleotide sequence ID" value="NZ_CP009935.1"/>
</dbReference>
<dbReference type="SMR" id="A9R4A9"/>
<dbReference type="GeneID" id="57974449"/>
<dbReference type="KEGG" id="ypg:YpAngola_A3726"/>
<dbReference type="PATRIC" id="fig|349746.12.peg.431"/>
<dbReference type="UniPathway" id="UPA00053">
    <property type="reaction ID" value="UER00085"/>
</dbReference>
<dbReference type="GO" id="GO:0005737">
    <property type="term" value="C:cytoplasm"/>
    <property type="evidence" value="ECO:0007669"/>
    <property type="project" value="UniProtKB-SubCell"/>
</dbReference>
<dbReference type="GO" id="GO:0003856">
    <property type="term" value="F:3-dehydroquinate synthase activity"/>
    <property type="evidence" value="ECO:0007669"/>
    <property type="project" value="UniProtKB-UniRule"/>
</dbReference>
<dbReference type="GO" id="GO:0046872">
    <property type="term" value="F:metal ion binding"/>
    <property type="evidence" value="ECO:0007669"/>
    <property type="project" value="UniProtKB-KW"/>
</dbReference>
<dbReference type="GO" id="GO:0000166">
    <property type="term" value="F:nucleotide binding"/>
    <property type="evidence" value="ECO:0007669"/>
    <property type="project" value="UniProtKB-KW"/>
</dbReference>
<dbReference type="GO" id="GO:0008652">
    <property type="term" value="P:amino acid biosynthetic process"/>
    <property type="evidence" value="ECO:0007669"/>
    <property type="project" value="UniProtKB-KW"/>
</dbReference>
<dbReference type="GO" id="GO:0009073">
    <property type="term" value="P:aromatic amino acid family biosynthetic process"/>
    <property type="evidence" value="ECO:0007669"/>
    <property type="project" value="UniProtKB-KW"/>
</dbReference>
<dbReference type="GO" id="GO:0009423">
    <property type="term" value="P:chorismate biosynthetic process"/>
    <property type="evidence" value="ECO:0007669"/>
    <property type="project" value="UniProtKB-UniRule"/>
</dbReference>
<dbReference type="CDD" id="cd08195">
    <property type="entry name" value="DHQS"/>
    <property type="match status" value="1"/>
</dbReference>
<dbReference type="FunFam" id="1.20.1090.10:FF:000002">
    <property type="entry name" value="3-dehydroquinate synthase"/>
    <property type="match status" value="1"/>
</dbReference>
<dbReference type="FunFam" id="3.40.50.1970:FF:000001">
    <property type="entry name" value="3-dehydroquinate synthase"/>
    <property type="match status" value="1"/>
</dbReference>
<dbReference type="Gene3D" id="3.40.50.1970">
    <property type="match status" value="1"/>
</dbReference>
<dbReference type="Gene3D" id="1.20.1090.10">
    <property type="entry name" value="Dehydroquinate synthase-like - alpha domain"/>
    <property type="match status" value="1"/>
</dbReference>
<dbReference type="HAMAP" id="MF_00110">
    <property type="entry name" value="DHQ_synthase"/>
    <property type="match status" value="1"/>
</dbReference>
<dbReference type="InterPro" id="IPR050071">
    <property type="entry name" value="Dehydroquinate_synthase"/>
</dbReference>
<dbReference type="InterPro" id="IPR016037">
    <property type="entry name" value="DHQ_synth_AroB"/>
</dbReference>
<dbReference type="InterPro" id="IPR030963">
    <property type="entry name" value="DHQ_synth_fam"/>
</dbReference>
<dbReference type="InterPro" id="IPR030960">
    <property type="entry name" value="DHQS/DOIS_N"/>
</dbReference>
<dbReference type="InterPro" id="IPR056179">
    <property type="entry name" value="DHQS_C"/>
</dbReference>
<dbReference type="NCBIfam" id="TIGR01357">
    <property type="entry name" value="aroB"/>
    <property type="match status" value="1"/>
</dbReference>
<dbReference type="PANTHER" id="PTHR43622">
    <property type="entry name" value="3-DEHYDROQUINATE SYNTHASE"/>
    <property type="match status" value="1"/>
</dbReference>
<dbReference type="PANTHER" id="PTHR43622:SF7">
    <property type="entry name" value="3-DEHYDROQUINATE SYNTHASE, CHLOROPLASTIC"/>
    <property type="match status" value="1"/>
</dbReference>
<dbReference type="Pfam" id="PF01761">
    <property type="entry name" value="DHQ_synthase"/>
    <property type="match status" value="1"/>
</dbReference>
<dbReference type="Pfam" id="PF24621">
    <property type="entry name" value="DHQS_C"/>
    <property type="match status" value="1"/>
</dbReference>
<dbReference type="PIRSF" id="PIRSF001455">
    <property type="entry name" value="DHQ_synth"/>
    <property type="match status" value="1"/>
</dbReference>
<dbReference type="SUPFAM" id="SSF56796">
    <property type="entry name" value="Dehydroquinate synthase-like"/>
    <property type="match status" value="1"/>
</dbReference>
<proteinExistence type="inferred from homology"/>
<feature type="chain" id="PRO_1000094661" description="3-dehydroquinate synthase">
    <location>
        <begin position="1"/>
        <end position="362"/>
    </location>
</feature>
<feature type="binding site" evidence="1">
    <location>
        <begin position="71"/>
        <end position="76"/>
    </location>
    <ligand>
        <name>NAD(+)</name>
        <dbReference type="ChEBI" id="CHEBI:57540"/>
    </ligand>
</feature>
<feature type="binding site" evidence="1">
    <location>
        <begin position="105"/>
        <end position="109"/>
    </location>
    <ligand>
        <name>NAD(+)</name>
        <dbReference type="ChEBI" id="CHEBI:57540"/>
    </ligand>
</feature>
<feature type="binding site" evidence="1">
    <location>
        <begin position="129"/>
        <end position="130"/>
    </location>
    <ligand>
        <name>NAD(+)</name>
        <dbReference type="ChEBI" id="CHEBI:57540"/>
    </ligand>
</feature>
<feature type="binding site" evidence="1">
    <location>
        <position position="142"/>
    </location>
    <ligand>
        <name>NAD(+)</name>
        <dbReference type="ChEBI" id="CHEBI:57540"/>
    </ligand>
</feature>
<feature type="binding site" evidence="1">
    <location>
        <position position="151"/>
    </location>
    <ligand>
        <name>NAD(+)</name>
        <dbReference type="ChEBI" id="CHEBI:57540"/>
    </ligand>
</feature>
<feature type="binding site" evidence="1">
    <location>
        <begin position="169"/>
        <end position="172"/>
    </location>
    <ligand>
        <name>NAD(+)</name>
        <dbReference type="ChEBI" id="CHEBI:57540"/>
    </ligand>
</feature>
<feature type="binding site" evidence="1">
    <location>
        <position position="184"/>
    </location>
    <ligand>
        <name>Zn(2+)</name>
        <dbReference type="ChEBI" id="CHEBI:29105"/>
    </ligand>
</feature>
<feature type="binding site" evidence="1">
    <location>
        <position position="248"/>
    </location>
    <ligand>
        <name>Zn(2+)</name>
        <dbReference type="ChEBI" id="CHEBI:29105"/>
    </ligand>
</feature>
<feature type="binding site" evidence="1">
    <location>
        <position position="265"/>
    </location>
    <ligand>
        <name>Zn(2+)</name>
        <dbReference type="ChEBI" id="CHEBI:29105"/>
    </ligand>
</feature>
<keyword id="KW-0028">Amino-acid biosynthesis</keyword>
<keyword id="KW-0057">Aromatic amino acid biosynthesis</keyword>
<keyword id="KW-0170">Cobalt</keyword>
<keyword id="KW-0963">Cytoplasm</keyword>
<keyword id="KW-0456">Lyase</keyword>
<keyword id="KW-0479">Metal-binding</keyword>
<keyword id="KW-0520">NAD</keyword>
<keyword id="KW-0547">Nucleotide-binding</keyword>
<keyword id="KW-0862">Zinc</keyword>
<gene>
    <name evidence="1" type="primary">aroB</name>
    <name type="ordered locus">YpAngola_A3726</name>
</gene>
<name>AROB_YERPG</name>
<reference key="1">
    <citation type="journal article" date="2010" name="J. Bacteriol.">
        <title>Genome sequence of the deep-rooted Yersinia pestis strain Angola reveals new insights into the evolution and pangenome of the plague bacterium.</title>
        <authorList>
            <person name="Eppinger M."/>
            <person name="Worsham P.L."/>
            <person name="Nikolich M.P."/>
            <person name="Riley D.R."/>
            <person name="Sebastian Y."/>
            <person name="Mou S."/>
            <person name="Achtman M."/>
            <person name="Lindler L.E."/>
            <person name="Ravel J."/>
        </authorList>
    </citation>
    <scope>NUCLEOTIDE SEQUENCE [LARGE SCALE GENOMIC DNA]</scope>
    <source>
        <strain>Angola</strain>
    </source>
</reference>
<comment type="function">
    <text evidence="1">Catalyzes the conversion of 3-deoxy-D-arabino-heptulosonate 7-phosphate (DAHP) to dehydroquinate (DHQ).</text>
</comment>
<comment type="catalytic activity">
    <reaction evidence="1">
        <text>7-phospho-2-dehydro-3-deoxy-D-arabino-heptonate = 3-dehydroquinate + phosphate</text>
        <dbReference type="Rhea" id="RHEA:21968"/>
        <dbReference type="ChEBI" id="CHEBI:32364"/>
        <dbReference type="ChEBI" id="CHEBI:43474"/>
        <dbReference type="ChEBI" id="CHEBI:58394"/>
        <dbReference type="EC" id="4.2.3.4"/>
    </reaction>
</comment>
<comment type="cofactor">
    <cofactor evidence="1">
        <name>Co(2+)</name>
        <dbReference type="ChEBI" id="CHEBI:48828"/>
    </cofactor>
    <cofactor evidence="1">
        <name>Zn(2+)</name>
        <dbReference type="ChEBI" id="CHEBI:29105"/>
    </cofactor>
    <text evidence="1">Binds 1 divalent metal cation per subunit. Can use either Co(2+) or Zn(2+).</text>
</comment>
<comment type="cofactor">
    <cofactor evidence="1">
        <name>NAD(+)</name>
        <dbReference type="ChEBI" id="CHEBI:57540"/>
    </cofactor>
</comment>
<comment type="pathway">
    <text evidence="1">Metabolic intermediate biosynthesis; chorismate biosynthesis; chorismate from D-erythrose 4-phosphate and phosphoenolpyruvate: step 2/7.</text>
</comment>
<comment type="subcellular location">
    <subcellularLocation>
        <location evidence="1">Cytoplasm</location>
    </subcellularLocation>
</comment>
<comment type="similarity">
    <text evidence="1">Belongs to the sugar phosphate cyclases superfamily. Dehydroquinate synthase family.</text>
</comment>
<protein>
    <recommendedName>
        <fullName evidence="1">3-dehydroquinate synthase</fullName>
        <shortName evidence="1">DHQS</shortName>
        <ecNumber evidence="1">4.2.3.4</ecNumber>
    </recommendedName>
</protein>
<organism>
    <name type="scientific">Yersinia pestis bv. Antiqua (strain Angola)</name>
    <dbReference type="NCBI Taxonomy" id="349746"/>
    <lineage>
        <taxon>Bacteria</taxon>
        <taxon>Pseudomonadati</taxon>
        <taxon>Pseudomonadota</taxon>
        <taxon>Gammaproteobacteria</taxon>
        <taxon>Enterobacterales</taxon>
        <taxon>Yersiniaceae</taxon>
        <taxon>Yersinia</taxon>
    </lineage>
</organism>